<organism evidence="9">
    <name type="scientific">Manica rubida</name>
    <name type="common">European giant red ant</name>
    <dbReference type="NCBI Taxonomy" id="219785"/>
    <lineage>
        <taxon>Eukaryota</taxon>
        <taxon>Metazoa</taxon>
        <taxon>Ecdysozoa</taxon>
        <taxon>Arthropoda</taxon>
        <taxon>Hexapoda</taxon>
        <taxon>Insecta</taxon>
        <taxon>Pterygota</taxon>
        <taxon>Neoptera</taxon>
        <taxon>Endopterygota</taxon>
        <taxon>Hymenoptera</taxon>
        <taxon>Apocrita</taxon>
        <taxon>Aculeata</taxon>
        <taxon>Formicoidea</taxon>
        <taxon>Formicidae</taxon>
        <taxon>Myrmicinae</taxon>
        <taxon>Manica</taxon>
    </lineage>
</organism>
<accession>A0A6G9KHD3</accession>
<name>TX12A_MANRB</name>
<sequence length="37" mass="3989">MKTIELITIFAMITTLMVTVVAGDPIDPKVLESLVGK</sequence>
<dbReference type="EMBL" id="MN765037">
    <property type="protein sequence ID" value="QIQ51447.1"/>
    <property type="molecule type" value="mRNA"/>
</dbReference>
<dbReference type="GO" id="GO:0005576">
    <property type="term" value="C:extracellular region"/>
    <property type="evidence" value="ECO:0000314"/>
    <property type="project" value="UniProtKB"/>
</dbReference>
<dbReference type="GO" id="GO:0090729">
    <property type="term" value="F:toxin activity"/>
    <property type="evidence" value="ECO:0000314"/>
    <property type="project" value="UniProtKB"/>
</dbReference>
<dbReference type="GO" id="GO:0044468">
    <property type="term" value="P:venom-mediated perturbation of blood coagulation"/>
    <property type="evidence" value="ECO:0000314"/>
    <property type="project" value="UniProtKB"/>
</dbReference>
<keyword id="KW-0027">Amidation</keyword>
<keyword id="KW-0903">Direct protein sequencing</keyword>
<keyword id="KW-0964">Secreted</keyword>
<keyword id="KW-0732">Signal</keyword>
<keyword id="KW-0800">Toxin</keyword>
<comment type="function">
    <text evidence="2 3">Toxin that induces mild paralysis, and reduces survival and reproduction when injected into aphids (A.pisum) (PubMed:31557881). May affect various processes in the aphid, including wound healing and hemolymph coagulation (PubMed:31557881). It does not increase the sensitivity of the aphids to the chemical insecticides imidacloprid, methomyl and Spirotetramat (PubMed:31557881). Has no insecticidal activity when injected into blowfly (L.caesar) (PubMed:32182430). Does not display any antibacterial or antifungal activity (PubMed:31557881).</text>
</comment>
<comment type="subcellular location">
    <subcellularLocation>
        <location evidence="2 3">Secreted</location>
    </subcellularLocation>
</comment>
<comment type="tissue specificity">
    <text evidence="2 3">Expressed by the venom gland.</text>
</comment>
<comment type="mass spectrometry" mass="1110.7" method="Electrospray" evidence="2 3"/>
<feature type="signal peptide" evidence="1">
    <location>
        <begin position="1"/>
        <end position="23"/>
    </location>
</feature>
<feature type="propeptide" id="PRO_0000453051" evidence="7 8">
    <location>
        <begin position="24"/>
        <end position="25"/>
    </location>
</feature>
<feature type="peptide" id="PRO_0000453052" description="U12-myrmicitoxin-Mri1a" evidence="2 3">
    <location>
        <begin position="26"/>
        <end position="35"/>
    </location>
</feature>
<feature type="modified residue" description="Valine amide" evidence="2 3">
    <location>
        <position position="35"/>
    </location>
</feature>
<evidence type="ECO:0000255" key="1"/>
<evidence type="ECO:0000269" key="2">
    <source>
    </source>
</evidence>
<evidence type="ECO:0000269" key="3">
    <source>
    </source>
</evidence>
<evidence type="ECO:0000303" key="4">
    <source>
    </source>
</evidence>
<evidence type="ECO:0000303" key="5">
    <source>
    </source>
</evidence>
<evidence type="ECO:0000305" key="6"/>
<evidence type="ECO:0000305" key="7">
    <source>
    </source>
</evidence>
<evidence type="ECO:0000305" key="8">
    <source>
    </source>
</evidence>
<evidence type="ECO:0000312" key="9">
    <source>
        <dbReference type="EMBL" id="QIQ51447.1"/>
    </source>
</evidence>
<reference evidence="9" key="1">
    <citation type="journal article" date="2020" name="J. Proteome Res.">
        <title>Venom Peptide Repertoire of the European Myrmicine Ant Manica rubida: Identification of Insecticidal Toxins.</title>
        <authorList>
            <person name="Touchard A."/>
            <person name="Aili S.R."/>
            <person name="Tene N."/>
            <person name="Barasse V."/>
            <person name="Klopp C."/>
            <person name="Dejean A."/>
            <person name="Kini R.M."/>
            <person name="Mrinalini X."/>
            <person name="Coquet L."/>
            <person name="Jouenne T."/>
            <person name="Lefranc B."/>
            <person name="Leprince J."/>
            <person name="Escoubas P."/>
            <person name="Nicholson G.M."/>
            <person name="Treilhou M."/>
            <person name="Bonnafe E."/>
        </authorList>
    </citation>
    <scope>NUCLEOTIDE SEQUENCE [MRNA]</scope>
    <scope>PROTEIN SEQUENCE OF 26-35</scope>
    <scope>FUNCTION</scope>
    <scope>SUBCELLULAR LOCATION</scope>
    <scope>TISSUE SPECIFICITY</scope>
    <scope>MASS SPECTROMETRY</scope>
    <scope>AMIDATION AT VAL-35</scope>
    <source>
        <tissue evidence="9">Venom gland</tissue>
    </source>
</reference>
<reference evidence="6" key="2">
    <citation type="journal article" date="2019" name="Toxins">
        <title>Identification and Functional Characterization of a Novel Insecticidal Decapeptide from the Myrmicine Ant Manica rubida.</title>
        <authorList>
            <person name="Heep J."/>
            <person name="Skaljac M."/>
            <person name="Grotmann J."/>
            <person name="Kessel T."/>
            <person name="Seip M."/>
            <person name="Schmidtberg H."/>
            <person name="Vilcinskas A."/>
        </authorList>
    </citation>
    <scope>PROTEIN SEQUENCE OF 26-35</scope>
    <scope>FUNCTION</scope>
    <scope>SUBCELLULAR LOCATION</scope>
    <scope>TISSUE SPECIFICITY</scope>
    <scope>MASS SPECTROMETRY</scope>
    <scope>AMIDATION AT VAL-35</scope>
    <source>
        <tissue evidence="4">Venom gland</tissue>
    </source>
</reference>
<proteinExistence type="evidence at protein level"/>
<protein>
    <recommendedName>
        <fullName evidence="5">U12-myrmicitoxin-Mri1a</fullName>
        <shortName evidence="5">U12-MYRTX-Mri1a</shortName>
    </recommendedName>
    <alternativeName>
        <fullName evidence="4">U-MYRTX-MANr1</fullName>
    </alternativeName>
</protein>